<reference key="1">
    <citation type="journal article" date="2008" name="J. Bacteriol.">
        <title>Genome sequence of the fish pathogen Renibacterium salmoninarum suggests reductive evolution away from an environmental Arthrobacter ancestor.</title>
        <authorList>
            <person name="Wiens G.D."/>
            <person name="Rockey D.D."/>
            <person name="Wu Z."/>
            <person name="Chang J."/>
            <person name="Levy R."/>
            <person name="Crane S."/>
            <person name="Chen D.S."/>
            <person name="Capri G.R."/>
            <person name="Burnett J.R."/>
            <person name="Sudheesh P.S."/>
            <person name="Schipma M.J."/>
            <person name="Burd H."/>
            <person name="Bhattacharyya A."/>
            <person name="Rhodes L.D."/>
            <person name="Kaul R."/>
            <person name="Strom M.S."/>
        </authorList>
    </citation>
    <scope>NUCLEOTIDE SEQUENCE [LARGE SCALE GENOMIC DNA]</scope>
    <source>
        <strain>ATCC 33209 / DSM 20767 / JCM 11484 / NBRC 15589 / NCIMB 2235</strain>
    </source>
</reference>
<proteinExistence type="inferred from homology"/>
<comment type="function">
    <text evidence="1">Plays an important role in the de novo pathway of purine nucleotide biosynthesis. Catalyzes the first committed step in the biosynthesis of AMP from IMP.</text>
</comment>
<comment type="catalytic activity">
    <reaction evidence="1">
        <text>IMP + L-aspartate + GTP = N(6)-(1,2-dicarboxyethyl)-AMP + GDP + phosphate + 2 H(+)</text>
        <dbReference type="Rhea" id="RHEA:15753"/>
        <dbReference type="ChEBI" id="CHEBI:15378"/>
        <dbReference type="ChEBI" id="CHEBI:29991"/>
        <dbReference type="ChEBI" id="CHEBI:37565"/>
        <dbReference type="ChEBI" id="CHEBI:43474"/>
        <dbReference type="ChEBI" id="CHEBI:57567"/>
        <dbReference type="ChEBI" id="CHEBI:58053"/>
        <dbReference type="ChEBI" id="CHEBI:58189"/>
        <dbReference type="EC" id="6.3.4.4"/>
    </reaction>
</comment>
<comment type="cofactor">
    <cofactor evidence="1">
        <name>Mg(2+)</name>
        <dbReference type="ChEBI" id="CHEBI:18420"/>
    </cofactor>
    <text evidence="1">Binds 1 Mg(2+) ion per subunit.</text>
</comment>
<comment type="pathway">
    <text evidence="1">Purine metabolism; AMP biosynthesis via de novo pathway; AMP from IMP: step 1/2.</text>
</comment>
<comment type="subunit">
    <text evidence="1">Homodimer.</text>
</comment>
<comment type="subcellular location">
    <subcellularLocation>
        <location evidence="1">Cytoplasm</location>
    </subcellularLocation>
</comment>
<comment type="similarity">
    <text evidence="1">Belongs to the adenylosuccinate synthetase family.</text>
</comment>
<comment type="sequence caution" evidence="2">
    <conflict type="erroneous initiation">
        <sequence resource="EMBL-CDS" id="ABY25100"/>
    </conflict>
</comment>
<dbReference type="EC" id="6.3.4.4" evidence="1"/>
<dbReference type="EMBL" id="CP000910">
    <property type="protein sequence ID" value="ABY25100.1"/>
    <property type="status" value="ALT_INIT"/>
    <property type="molecule type" value="Genomic_DNA"/>
</dbReference>
<dbReference type="RefSeq" id="WP_041685919.1">
    <property type="nucleotide sequence ID" value="NC_010168.1"/>
</dbReference>
<dbReference type="SMR" id="A9WV79"/>
<dbReference type="STRING" id="288705.RSal33209_3390"/>
<dbReference type="KEGG" id="rsa:RSal33209_3390"/>
<dbReference type="eggNOG" id="COG0104">
    <property type="taxonomic scope" value="Bacteria"/>
</dbReference>
<dbReference type="HOGENOM" id="CLU_029848_0_0_11"/>
<dbReference type="UniPathway" id="UPA00075">
    <property type="reaction ID" value="UER00335"/>
</dbReference>
<dbReference type="Proteomes" id="UP000002007">
    <property type="component" value="Chromosome"/>
</dbReference>
<dbReference type="GO" id="GO:0005737">
    <property type="term" value="C:cytoplasm"/>
    <property type="evidence" value="ECO:0007669"/>
    <property type="project" value="UniProtKB-SubCell"/>
</dbReference>
<dbReference type="GO" id="GO:0004019">
    <property type="term" value="F:adenylosuccinate synthase activity"/>
    <property type="evidence" value="ECO:0007669"/>
    <property type="project" value="UniProtKB-UniRule"/>
</dbReference>
<dbReference type="GO" id="GO:0005525">
    <property type="term" value="F:GTP binding"/>
    <property type="evidence" value="ECO:0007669"/>
    <property type="project" value="UniProtKB-UniRule"/>
</dbReference>
<dbReference type="GO" id="GO:0000287">
    <property type="term" value="F:magnesium ion binding"/>
    <property type="evidence" value="ECO:0007669"/>
    <property type="project" value="UniProtKB-UniRule"/>
</dbReference>
<dbReference type="GO" id="GO:0044208">
    <property type="term" value="P:'de novo' AMP biosynthetic process"/>
    <property type="evidence" value="ECO:0007669"/>
    <property type="project" value="UniProtKB-UniRule"/>
</dbReference>
<dbReference type="GO" id="GO:0046040">
    <property type="term" value="P:IMP metabolic process"/>
    <property type="evidence" value="ECO:0007669"/>
    <property type="project" value="TreeGrafter"/>
</dbReference>
<dbReference type="CDD" id="cd03108">
    <property type="entry name" value="AdSS"/>
    <property type="match status" value="1"/>
</dbReference>
<dbReference type="FunFam" id="1.10.300.10:FF:000001">
    <property type="entry name" value="Adenylosuccinate synthetase"/>
    <property type="match status" value="1"/>
</dbReference>
<dbReference type="FunFam" id="3.90.170.10:FF:000001">
    <property type="entry name" value="Adenylosuccinate synthetase"/>
    <property type="match status" value="1"/>
</dbReference>
<dbReference type="Gene3D" id="3.40.440.10">
    <property type="entry name" value="Adenylosuccinate Synthetase, subunit A, domain 1"/>
    <property type="match status" value="1"/>
</dbReference>
<dbReference type="Gene3D" id="1.10.300.10">
    <property type="entry name" value="Adenylosuccinate Synthetase, subunit A, domain 2"/>
    <property type="match status" value="1"/>
</dbReference>
<dbReference type="Gene3D" id="3.90.170.10">
    <property type="entry name" value="Adenylosuccinate Synthetase, subunit A, domain 3"/>
    <property type="match status" value="1"/>
</dbReference>
<dbReference type="HAMAP" id="MF_00011">
    <property type="entry name" value="Adenylosucc_synth"/>
    <property type="match status" value="1"/>
</dbReference>
<dbReference type="InterPro" id="IPR018220">
    <property type="entry name" value="Adenylosuccin_syn_GTP-bd"/>
</dbReference>
<dbReference type="InterPro" id="IPR033128">
    <property type="entry name" value="Adenylosuccin_syn_Lys_AS"/>
</dbReference>
<dbReference type="InterPro" id="IPR042109">
    <property type="entry name" value="Adenylosuccinate_synth_dom1"/>
</dbReference>
<dbReference type="InterPro" id="IPR042110">
    <property type="entry name" value="Adenylosuccinate_synth_dom2"/>
</dbReference>
<dbReference type="InterPro" id="IPR042111">
    <property type="entry name" value="Adenylosuccinate_synth_dom3"/>
</dbReference>
<dbReference type="InterPro" id="IPR001114">
    <property type="entry name" value="Adenylosuccinate_synthetase"/>
</dbReference>
<dbReference type="InterPro" id="IPR027417">
    <property type="entry name" value="P-loop_NTPase"/>
</dbReference>
<dbReference type="NCBIfam" id="NF002223">
    <property type="entry name" value="PRK01117.1"/>
    <property type="match status" value="1"/>
</dbReference>
<dbReference type="NCBIfam" id="TIGR00184">
    <property type="entry name" value="purA"/>
    <property type="match status" value="1"/>
</dbReference>
<dbReference type="PANTHER" id="PTHR11846">
    <property type="entry name" value="ADENYLOSUCCINATE SYNTHETASE"/>
    <property type="match status" value="1"/>
</dbReference>
<dbReference type="PANTHER" id="PTHR11846:SF0">
    <property type="entry name" value="ADENYLOSUCCINATE SYNTHETASE"/>
    <property type="match status" value="1"/>
</dbReference>
<dbReference type="Pfam" id="PF00709">
    <property type="entry name" value="Adenylsucc_synt"/>
    <property type="match status" value="1"/>
</dbReference>
<dbReference type="SMART" id="SM00788">
    <property type="entry name" value="Adenylsucc_synt"/>
    <property type="match status" value="1"/>
</dbReference>
<dbReference type="SUPFAM" id="SSF52540">
    <property type="entry name" value="P-loop containing nucleoside triphosphate hydrolases"/>
    <property type="match status" value="1"/>
</dbReference>
<dbReference type="PROSITE" id="PS01266">
    <property type="entry name" value="ADENYLOSUCCIN_SYN_1"/>
    <property type="match status" value="1"/>
</dbReference>
<dbReference type="PROSITE" id="PS00513">
    <property type="entry name" value="ADENYLOSUCCIN_SYN_2"/>
    <property type="match status" value="1"/>
</dbReference>
<organism>
    <name type="scientific">Renibacterium salmoninarum (strain ATCC 33209 / DSM 20767 / JCM 11484 / NBRC 15589 / NCIMB 2235)</name>
    <dbReference type="NCBI Taxonomy" id="288705"/>
    <lineage>
        <taxon>Bacteria</taxon>
        <taxon>Bacillati</taxon>
        <taxon>Actinomycetota</taxon>
        <taxon>Actinomycetes</taxon>
        <taxon>Micrococcales</taxon>
        <taxon>Micrococcaceae</taxon>
        <taxon>Renibacterium</taxon>
    </lineage>
</organism>
<accession>A9WV79</accession>
<feature type="chain" id="PRO_0000337005" description="Adenylosuccinate synthetase">
    <location>
        <begin position="1"/>
        <end position="429"/>
    </location>
</feature>
<feature type="active site" description="Proton acceptor" evidence="1">
    <location>
        <position position="13"/>
    </location>
</feature>
<feature type="active site" description="Proton donor" evidence="1">
    <location>
        <position position="41"/>
    </location>
</feature>
<feature type="binding site" evidence="1">
    <location>
        <begin position="12"/>
        <end position="18"/>
    </location>
    <ligand>
        <name>GTP</name>
        <dbReference type="ChEBI" id="CHEBI:37565"/>
    </ligand>
</feature>
<feature type="binding site" description="in other chain" evidence="1">
    <location>
        <begin position="13"/>
        <end position="16"/>
    </location>
    <ligand>
        <name>IMP</name>
        <dbReference type="ChEBI" id="CHEBI:58053"/>
        <note>ligand shared between dimeric partners</note>
    </ligand>
</feature>
<feature type="binding site" evidence="1">
    <location>
        <position position="13"/>
    </location>
    <ligand>
        <name>Mg(2+)</name>
        <dbReference type="ChEBI" id="CHEBI:18420"/>
    </ligand>
</feature>
<feature type="binding site" description="in other chain" evidence="1">
    <location>
        <begin position="38"/>
        <end position="41"/>
    </location>
    <ligand>
        <name>IMP</name>
        <dbReference type="ChEBI" id="CHEBI:58053"/>
        <note>ligand shared between dimeric partners</note>
    </ligand>
</feature>
<feature type="binding site" evidence="1">
    <location>
        <begin position="40"/>
        <end position="42"/>
    </location>
    <ligand>
        <name>GTP</name>
        <dbReference type="ChEBI" id="CHEBI:37565"/>
    </ligand>
</feature>
<feature type="binding site" evidence="1">
    <location>
        <position position="40"/>
    </location>
    <ligand>
        <name>Mg(2+)</name>
        <dbReference type="ChEBI" id="CHEBI:18420"/>
    </ligand>
</feature>
<feature type="binding site" description="in other chain" evidence="1">
    <location>
        <position position="128"/>
    </location>
    <ligand>
        <name>IMP</name>
        <dbReference type="ChEBI" id="CHEBI:58053"/>
        <note>ligand shared between dimeric partners</note>
    </ligand>
</feature>
<feature type="binding site" evidence="1">
    <location>
        <position position="142"/>
    </location>
    <ligand>
        <name>IMP</name>
        <dbReference type="ChEBI" id="CHEBI:58053"/>
        <note>ligand shared between dimeric partners</note>
    </ligand>
</feature>
<feature type="binding site" description="in other chain" evidence="1">
    <location>
        <position position="223"/>
    </location>
    <ligand>
        <name>IMP</name>
        <dbReference type="ChEBI" id="CHEBI:58053"/>
        <note>ligand shared between dimeric partners</note>
    </ligand>
</feature>
<feature type="binding site" description="in other chain" evidence="1">
    <location>
        <position position="238"/>
    </location>
    <ligand>
        <name>IMP</name>
        <dbReference type="ChEBI" id="CHEBI:58053"/>
        <note>ligand shared between dimeric partners</note>
    </ligand>
</feature>
<feature type="binding site" evidence="1">
    <location>
        <begin position="298"/>
        <end position="304"/>
    </location>
    <ligand>
        <name>substrate</name>
    </ligand>
</feature>
<feature type="binding site" description="in other chain" evidence="1">
    <location>
        <position position="302"/>
    </location>
    <ligand>
        <name>IMP</name>
        <dbReference type="ChEBI" id="CHEBI:58053"/>
        <note>ligand shared between dimeric partners</note>
    </ligand>
</feature>
<feature type="binding site" evidence="1">
    <location>
        <position position="304"/>
    </location>
    <ligand>
        <name>GTP</name>
        <dbReference type="ChEBI" id="CHEBI:37565"/>
    </ligand>
</feature>
<feature type="binding site" evidence="1">
    <location>
        <begin position="330"/>
        <end position="332"/>
    </location>
    <ligand>
        <name>GTP</name>
        <dbReference type="ChEBI" id="CHEBI:37565"/>
    </ligand>
</feature>
<feature type="binding site" evidence="1">
    <location>
        <begin position="412"/>
        <end position="414"/>
    </location>
    <ligand>
        <name>GTP</name>
        <dbReference type="ChEBI" id="CHEBI:37565"/>
    </ligand>
</feature>
<evidence type="ECO:0000255" key="1">
    <source>
        <dbReference type="HAMAP-Rule" id="MF_00011"/>
    </source>
</evidence>
<evidence type="ECO:0000305" key="2"/>
<name>PURA_RENSM</name>
<gene>
    <name evidence="1" type="primary">purA</name>
    <name type="ordered locus">RSal33209_3390</name>
</gene>
<sequence>MPAIVIVGAQWGDEGKGKATDLLGGRVDYVVKPNGGNNAGHTVVVNGEKYELKLLPAGILSPNAIPIIGNGCVVNLEALFDEIDALKARGADTSKLRVSANAHLVAPYHQVLDKVTERFLGKRAIGTTGRGIGPAYMDKVARLGIRVQDVFDESILRQKVEGSLAQKNELLVKVYNRRAIDVEEIVAYFLGFAERLQPLVIDSTIELNNALDDGKVVLMEGGQATYLDVDHGTYPFVTSSNPTAGGSSVGSGIGPTRITRVVGIIKAYTTRVGAGPFPTELFDEMGEYLQKTGGEFGVNTGRPRRCGWYDAVLARHAARINGFTDYFVTKLDVLTGIEKIPVCVAYDVDGVRHEEMPMTQTEFHHAKPIFEYLDGWTEDISGAKTLDDLPENARNYVLELEKMSGTRFSAIGVGPDRDQTIVVHDLIDG</sequence>
<keyword id="KW-0963">Cytoplasm</keyword>
<keyword id="KW-0342">GTP-binding</keyword>
<keyword id="KW-0436">Ligase</keyword>
<keyword id="KW-0460">Magnesium</keyword>
<keyword id="KW-0479">Metal-binding</keyword>
<keyword id="KW-0547">Nucleotide-binding</keyword>
<keyword id="KW-0658">Purine biosynthesis</keyword>
<keyword id="KW-1185">Reference proteome</keyword>
<protein>
    <recommendedName>
        <fullName evidence="1">Adenylosuccinate synthetase</fullName>
        <shortName evidence="1">AMPSase</shortName>
        <shortName evidence="1">AdSS</shortName>
        <ecNumber evidence="1">6.3.4.4</ecNumber>
    </recommendedName>
    <alternativeName>
        <fullName evidence="1">IMP--aspartate ligase</fullName>
    </alternativeName>
</protein>